<reference key="1">
    <citation type="journal article" date="2005" name="Nature">
        <title>The map-based sequence of the rice genome.</title>
        <authorList>
            <consortium name="International rice genome sequencing project (IRGSP)"/>
        </authorList>
    </citation>
    <scope>NUCLEOTIDE SEQUENCE [LARGE SCALE GENOMIC DNA]</scope>
    <source>
        <strain>cv. Nipponbare</strain>
    </source>
</reference>
<reference key="2">
    <citation type="journal article" date="2008" name="Nucleic Acids Res.">
        <title>The rice annotation project database (RAP-DB): 2008 update.</title>
        <authorList>
            <consortium name="The rice annotation project (RAP)"/>
        </authorList>
    </citation>
    <scope>GENOME REANNOTATION</scope>
    <source>
        <strain>cv. Nipponbare</strain>
    </source>
</reference>
<reference key="3">
    <citation type="journal article" date="2013" name="Rice">
        <title>Improvement of the Oryza sativa Nipponbare reference genome using next generation sequence and optical map data.</title>
        <authorList>
            <person name="Kawahara Y."/>
            <person name="de la Bastide M."/>
            <person name="Hamilton J.P."/>
            <person name="Kanamori H."/>
            <person name="McCombie W.R."/>
            <person name="Ouyang S."/>
            <person name="Schwartz D.C."/>
            <person name="Tanaka T."/>
            <person name="Wu J."/>
            <person name="Zhou S."/>
            <person name="Childs K.L."/>
            <person name="Davidson R.M."/>
            <person name="Lin H."/>
            <person name="Quesada-Ocampo L."/>
            <person name="Vaillancourt B."/>
            <person name="Sakai H."/>
            <person name="Lee S.S."/>
            <person name="Kim J."/>
            <person name="Numa H."/>
            <person name="Itoh T."/>
            <person name="Buell C.R."/>
            <person name="Matsumoto T."/>
        </authorList>
    </citation>
    <scope>GENOME REANNOTATION</scope>
    <source>
        <strain>cv. Nipponbare</strain>
    </source>
</reference>
<reference key="4">
    <citation type="journal article" date="2005" name="PLoS Biol.">
        <title>The genomes of Oryza sativa: a history of duplications.</title>
        <authorList>
            <person name="Yu J."/>
            <person name="Wang J."/>
            <person name="Lin W."/>
            <person name="Li S."/>
            <person name="Li H."/>
            <person name="Zhou J."/>
            <person name="Ni P."/>
            <person name="Dong W."/>
            <person name="Hu S."/>
            <person name="Zeng C."/>
            <person name="Zhang J."/>
            <person name="Zhang Y."/>
            <person name="Li R."/>
            <person name="Xu Z."/>
            <person name="Li S."/>
            <person name="Li X."/>
            <person name="Zheng H."/>
            <person name="Cong L."/>
            <person name="Lin L."/>
            <person name="Yin J."/>
            <person name="Geng J."/>
            <person name="Li G."/>
            <person name="Shi J."/>
            <person name="Liu J."/>
            <person name="Lv H."/>
            <person name="Li J."/>
            <person name="Wang J."/>
            <person name="Deng Y."/>
            <person name="Ran L."/>
            <person name="Shi X."/>
            <person name="Wang X."/>
            <person name="Wu Q."/>
            <person name="Li C."/>
            <person name="Ren X."/>
            <person name="Wang J."/>
            <person name="Wang X."/>
            <person name="Li D."/>
            <person name="Liu D."/>
            <person name="Zhang X."/>
            <person name="Ji Z."/>
            <person name="Zhao W."/>
            <person name="Sun Y."/>
            <person name="Zhang Z."/>
            <person name="Bao J."/>
            <person name="Han Y."/>
            <person name="Dong L."/>
            <person name="Ji J."/>
            <person name="Chen P."/>
            <person name="Wu S."/>
            <person name="Liu J."/>
            <person name="Xiao Y."/>
            <person name="Bu D."/>
            <person name="Tan J."/>
            <person name="Yang L."/>
            <person name="Ye C."/>
            <person name="Zhang J."/>
            <person name="Xu J."/>
            <person name="Zhou Y."/>
            <person name="Yu Y."/>
            <person name="Zhang B."/>
            <person name="Zhuang S."/>
            <person name="Wei H."/>
            <person name="Liu B."/>
            <person name="Lei M."/>
            <person name="Yu H."/>
            <person name="Li Y."/>
            <person name="Xu H."/>
            <person name="Wei S."/>
            <person name="He X."/>
            <person name="Fang L."/>
            <person name="Zhang Z."/>
            <person name="Zhang Y."/>
            <person name="Huang X."/>
            <person name="Su Z."/>
            <person name="Tong W."/>
            <person name="Li J."/>
            <person name="Tong Z."/>
            <person name="Li S."/>
            <person name="Ye J."/>
            <person name="Wang L."/>
            <person name="Fang L."/>
            <person name="Lei T."/>
            <person name="Chen C.-S."/>
            <person name="Chen H.-C."/>
            <person name="Xu Z."/>
            <person name="Li H."/>
            <person name="Huang H."/>
            <person name="Zhang F."/>
            <person name="Xu H."/>
            <person name="Li N."/>
            <person name="Zhao C."/>
            <person name="Li S."/>
            <person name="Dong L."/>
            <person name="Huang Y."/>
            <person name="Li L."/>
            <person name="Xi Y."/>
            <person name="Qi Q."/>
            <person name="Li W."/>
            <person name="Zhang B."/>
            <person name="Hu W."/>
            <person name="Zhang Y."/>
            <person name="Tian X."/>
            <person name="Jiao Y."/>
            <person name="Liang X."/>
            <person name="Jin J."/>
            <person name="Gao L."/>
            <person name="Zheng W."/>
            <person name="Hao B."/>
            <person name="Liu S.-M."/>
            <person name="Wang W."/>
            <person name="Yuan L."/>
            <person name="Cao M."/>
            <person name="McDermott J."/>
            <person name="Samudrala R."/>
            <person name="Wang J."/>
            <person name="Wong G.K.-S."/>
            <person name="Yang H."/>
        </authorList>
    </citation>
    <scope>NUCLEOTIDE SEQUENCE [LARGE SCALE GENOMIC DNA]</scope>
    <source>
        <strain>cv. Nipponbare</strain>
    </source>
</reference>
<reference key="5">
    <citation type="journal article" date="2003" name="Science">
        <title>Collection, mapping, and annotation of over 28,000 cDNA clones from japonica rice.</title>
        <authorList>
            <consortium name="The rice full-length cDNA consortium"/>
        </authorList>
    </citation>
    <scope>NUCLEOTIDE SEQUENCE [LARGE SCALE MRNA]</scope>
    <source>
        <strain>cv. Nipponbare</strain>
    </source>
</reference>
<reference key="6">
    <citation type="journal article" date="2006" name="Plant Cell">
        <title>Wax-deficient anther1 is involved in cuticle and wax production in rice anther walls and is required for pollen development.</title>
        <authorList>
            <person name="Jung K.-H."/>
            <person name="Han M.-J."/>
            <person name="Lee D.-Y."/>
            <person name="Lee Y.-S."/>
            <person name="Schreiber L."/>
            <person name="Franke R."/>
            <person name="Faust A."/>
            <person name="Yephremov A."/>
            <person name="Saedler H."/>
            <person name="Kim Y.-W."/>
            <person name="Hwang I."/>
            <person name="An G."/>
        </authorList>
    </citation>
    <scope>TISSUE SPECIFICITY</scope>
    <scope>DEVELOPMENTAL STAGE</scope>
</reference>
<reference key="7">
    <citation type="journal article" date="2009" name="Plant Mol. Biol.">
        <title>Characterization of Glossy1-homologous genes in rice involved in leaf wax accumulation and drought resistance.</title>
        <authorList>
            <person name="Islam M.A."/>
            <person name="Du H."/>
            <person name="Ning J."/>
            <person name="Ye H."/>
            <person name="Xiong L."/>
        </authorList>
    </citation>
    <scope>TISSUE SPECIFICITY</scope>
    <scope>INDUCTION BY COLD AND ABSCISIC ACID</scope>
    <scope>GENE FAMILY</scope>
    <scope>NOMENCLATURE</scope>
</reference>
<name>GLO14_ORYSJ</name>
<protein>
    <recommendedName>
        <fullName evidence="6">Very-long-chain aldehyde decarbonylase GL1-4</fullName>
        <ecNumber evidence="1">4.1.99.5</ecNumber>
    </recommendedName>
    <alternativeName>
        <fullName evidence="5">Protein GLOSSY 1-4</fullName>
    </alternativeName>
</protein>
<proteinExistence type="evidence at transcript level"/>
<feature type="chain" id="PRO_0000445873" description="Very-long-chain aldehyde decarbonylase GL1-4">
    <location>
        <begin position="1"/>
        <end position="619"/>
    </location>
</feature>
<feature type="transmembrane region" description="Helical" evidence="2">
    <location>
        <begin position="45"/>
        <end position="65"/>
    </location>
</feature>
<feature type="transmembrane region" description="Helical" evidence="2">
    <location>
        <begin position="94"/>
        <end position="114"/>
    </location>
</feature>
<feature type="transmembrane region" description="Helical" evidence="2">
    <location>
        <begin position="126"/>
        <end position="146"/>
    </location>
</feature>
<feature type="transmembrane region" description="Helical" evidence="2">
    <location>
        <begin position="178"/>
        <end position="198"/>
    </location>
</feature>
<feature type="transmembrane region" description="Helical" evidence="2">
    <location>
        <begin position="325"/>
        <end position="345"/>
    </location>
</feature>
<feature type="domain" description="Fatty acid hydroxylase" evidence="2">
    <location>
        <begin position="138"/>
        <end position="272"/>
    </location>
</feature>
<feature type="sequence conflict" description="In Ref. 4; EEE57393." evidence="6" ref="4">
    <original>LTEWPWH</original>
    <variation>FYEWALD</variation>
    <location>
        <begin position="8"/>
        <end position="14"/>
    </location>
</feature>
<feature type="sequence conflict" description="In Ref. 5; AK066386." evidence="6" ref="5">
    <original>D</original>
    <variation>G</variation>
    <location>
        <position position="87"/>
    </location>
</feature>
<sequence>MATRPGPLTEWPWHRLGNFKYVVMAPVVAHGARRVMRNGWGDLDIAFSLILPSLLLRMIHNQIWISLSRYQTARSKHRIVDRGIEFDQVDRERGWDDQILFNGLVFYAGYLAMPSVRRMPVWRTDGAVVTALVHTGPVEFLYYWFHRALHHHFLYSRYHSHHHASIVTEPITSVIHPFAEHVVYFILFAIPILSTIYLGNVSAMGIVGYIAYIDFMNNMGHCNFELVPEWIFQIFPPLKYLIYTPSFHSLHHTQFRTNYSLFMPFYDYIYNTMDKSSDELYESSLKGTEETPDLVHLTHMTNLQSAYHLRIGIASIASKPYSDSAWYMWTLWPLAWLSMVLAWIYGSSAFVVERIKLNKMKMQTWALPRYNFQYGLTWEREPINDLIEKAILDADMKGVKVISLGLLNQAKQLNGNGELFRQKYPKLGVRIIDGSGLATAVVLKSIPSDAKKVFLRTGTSKIARAIAIALCDRGVQVIMNEKEVYHMLKSQIPENRASYLKLSSDNVPQLWIVHNIDDNEQKMAPKGTIFIPISQFPLKKLRKDCTYMSTPAMRIPEEMKNIHSCENWLPRRVMSAWHIAGILHALEGWNMHECGDEMMDIEKSWSAAIRHGFLPLTKA</sequence>
<accession>Q6K9F6</accession>
<accession>B9F151</accession>
<keyword id="KW-0256">Endoplasmic reticulum</keyword>
<keyword id="KW-0456">Lyase</keyword>
<keyword id="KW-0472">Membrane</keyword>
<keyword id="KW-0521">NADP</keyword>
<keyword id="KW-1185">Reference proteome</keyword>
<keyword id="KW-0812">Transmembrane</keyword>
<keyword id="KW-1133">Transmembrane helix</keyword>
<dbReference type="EC" id="4.1.99.5" evidence="1"/>
<dbReference type="EMBL" id="AP004053">
    <property type="protein sequence ID" value="BAD21539.1"/>
    <property type="molecule type" value="Genomic_DNA"/>
</dbReference>
<dbReference type="EMBL" id="AP004059">
    <property type="protein sequence ID" value="BAD21579.1"/>
    <property type="molecule type" value="Genomic_DNA"/>
</dbReference>
<dbReference type="EMBL" id="AP008208">
    <property type="protein sequence ID" value="BAF09373.1"/>
    <property type="molecule type" value="Genomic_DNA"/>
</dbReference>
<dbReference type="EMBL" id="AP014958">
    <property type="protein sequence ID" value="BAS79824.1"/>
    <property type="molecule type" value="Genomic_DNA"/>
</dbReference>
<dbReference type="EMBL" id="CM000139">
    <property type="protein sequence ID" value="EEE57393.1"/>
    <property type="molecule type" value="Genomic_DNA"/>
</dbReference>
<dbReference type="EMBL" id="AK066386">
    <property type="status" value="NOT_ANNOTATED_CDS"/>
    <property type="molecule type" value="mRNA"/>
</dbReference>
<dbReference type="FunCoup" id="Q6K9F6">
    <property type="interactions" value="206"/>
</dbReference>
<dbReference type="STRING" id="39947.Q6K9F6"/>
<dbReference type="PaxDb" id="39947-Q6K9F6"/>
<dbReference type="EnsemblPlants" id="Os02t0621300-01">
    <property type="protein sequence ID" value="Os02t0621300-01"/>
    <property type="gene ID" value="Os02g0621300"/>
</dbReference>
<dbReference type="GeneID" id="4330012"/>
<dbReference type="Gramene" id="Os02t0621300-01">
    <property type="protein sequence ID" value="Os02t0621300-01"/>
    <property type="gene ID" value="Os02g0621300"/>
</dbReference>
<dbReference type="KEGG" id="dosa:Os02g0621300"/>
<dbReference type="KEGG" id="osa:4330012"/>
<dbReference type="eggNOG" id="ENOG502QR3T">
    <property type="taxonomic scope" value="Eukaryota"/>
</dbReference>
<dbReference type="HOGENOM" id="CLU_017842_1_0_1"/>
<dbReference type="InParanoid" id="Q6K9F6"/>
<dbReference type="OMA" id="KMAPEGA"/>
<dbReference type="OrthoDB" id="408954at2759"/>
<dbReference type="Proteomes" id="UP000000763">
    <property type="component" value="Chromosome 2"/>
</dbReference>
<dbReference type="Proteomes" id="UP000007752">
    <property type="component" value="Chromosome 2"/>
</dbReference>
<dbReference type="Proteomes" id="UP000059680">
    <property type="component" value="Chromosome 2"/>
</dbReference>
<dbReference type="GO" id="GO:0005789">
    <property type="term" value="C:endoplasmic reticulum membrane"/>
    <property type="evidence" value="ECO:0007669"/>
    <property type="project" value="UniProtKB-SubCell"/>
</dbReference>
<dbReference type="GO" id="GO:0071771">
    <property type="term" value="F:aldehyde oxygenase (deformylating) activity"/>
    <property type="evidence" value="ECO:0007669"/>
    <property type="project" value="UniProtKB-EC"/>
</dbReference>
<dbReference type="GO" id="GO:0005506">
    <property type="term" value="F:iron ion binding"/>
    <property type="evidence" value="ECO:0007669"/>
    <property type="project" value="InterPro"/>
</dbReference>
<dbReference type="GO" id="GO:0016491">
    <property type="term" value="F:oxidoreductase activity"/>
    <property type="evidence" value="ECO:0007669"/>
    <property type="project" value="InterPro"/>
</dbReference>
<dbReference type="GO" id="GO:0008610">
    <property type="term" value="P:lipid biosynthetic process"/>
    <property type="evidence" value="ECO:0007669"/>
    <property type="project" value="InterPro"/>
</dbReference>
<dbReference type="GO" id="GO:0009737">
    <property type="term" value="P:response to abscisic acid"/>
    <property type="evidence" value="ECO:0000270"/>
    <property type="project" value="UniProtKB"/>
</dbReference>
<dbReference type="GO" id="GO:0009409">
    <property type="term" value="P:response to cold"/>
    <property type="evidence" value="ECO:0000270"/>
    <property type="project" value="UniProtKB"/>
</dbReference>
<dbReference type="InterPro" id="IPR021940">
    <property type="entry name" value="CER1-like_C"/>
</dbReference>
<dbReference type="InterPro" id="IPR006694">
    <property type="entry name" value="Fatty_acid_hydroxylase"/>
</dbReference>
<dbReference type="InterPro" id="IPR050307">
    <property type="entry name" value="Sterol_Desaturase_Related"/>
</dbReference>
<dbReference type="PANTHER" id="PTHR11863">
    <property type="entry name" value="STEROL DESATURASE"/>
    <property type="match status" value="1"/>
</dbReference>
<dbReference type="Pfam" id="PF12076">
    <property type="entry name" value="CER1-like_C"/>
    <property type="match status" value="1"/>
</dbReference>
<dbReference type="Pfam" id="PF04116">
    <property type="entry name" value="FA_hydroxylase"/>
    <property type="match status" value="1"/>
</dbReference>
<organism>
    <name type="scientific">Oryza sativa subsp. japonica</name>
    <name type="common">Rice</name>
    <dbReference type="NCBI Taxonomy" id="39947"/>
    <lineage>
        <taxon>Eukaryota</taxon>
        <taxon>Viridiplantae</taxon>
        <taxon>Streptophyta</taxon>
        <taxon>Embryophyta</taxon>
        <taxon>Tracheophyta</taxon>
        <taxon>Spermatophyta</taxon>
        <taxon>Magnoliopsida</taxon>
        <taxon>Liliopsida</taxon>
        <taxon>Poales</taxon>
        <taxon>Poaceae</taxon>
        <taxon>BOP clade</taxon>
        <taxon>Oryzoideae</taxon>
        <taxon>Oryzeae</taxon>
        <taxon>Oryzinae</taxon>
        <taxon>Oryza</taxon>
        <taxon>Oryza sativa</taxon>
    </lineage>
</organism>
<evidence type="ECO:0000250" key="1">
    <source>
        <dbReference type="UniProtKB" id="F4HVY0"/>
    </source>
</evidence>
<evidence type="ECO:0000255" key="2"/>
<evidence type="ECO:0000269" key="3">
    <source>
    </source>
</evidence>
<evidence type="ECO:0000269" key="4">
    <source>
    </source>
</evidence>
<evidence type="ECO:0000303" key="5">
    <source>
    </source>
</evidence>
<evidence type="ECO:0000305" key="6"/>
<evidence type="ECO:0000305" key="7">
    <source>
    </source>
</evidence>
<evidence type="ECO:0000312" key="8">
    <source>
        <dbReference type="EMBL" id="BAD21539.1"/>
    </source>
</evidence>
<evidence type="ECO:0000312" key="9">
    <source>
        <dbReference type="EMBL" id="BAD21579.1"/>
    </source>
</evidence>
<evidence type="ECO:0000312" key="10">
    <source>
        <dbReference type="EMBL" id="BAF09373.1"/>
    </source>
</evidence>
<evidence type="ECO:0000312" key="11">
    <source>
        <dbReference type="EMBL" id="BAS79824.1"/>
    </source>
</evidence>
<comment type="function">
    <text evidence="1">Aldehyde decarbonylase involved in the conversion of aldehydes to alkanes. Core component of a very-long-chain alkane synthesis complex.</text>
</comment>
<comment type="catalytic activity">
    <reaction evidence="1">
        <text>a long-chain fatty aldehyde + 2 NADPH + O2 + H(+) = a long-chain alkane + formate + 2 NADP(+) + H2O</text>
        <dbReference type="Rhea" id="RHEA:21440"/>
        <dbReference type="ChEBI" id="CHEBI:15377"/>
        <dbReference type="ChEBI" id="CHEBI:15378"/>
        <dbReference type="ChEBI" id="CHEBI:15379"/>
        <dbReference type="ChEBI" id="CHEBI:15740"/>
        <dbReference type="ChEBI" id="CHEBI:17176"/>
        <dbReference type="ChEBI" id="CHEBI:57783"/>
        <dbReference type="ChEBI" id="CHEBI:58349"/>
        <dbReference type="ChEBI" id="CHEBI:83563"/>
        <dbReference type="EC" id="4.1.99.5"/>
    </reaction>
</comment>
<comment type="subunit">
    <text evidence="1">Homodimer.</text>
</comment>
<comment type="subcellular location">
    <subcellularLocation>
        <location evidence="1">Endoplasmic reticulum membrane</location>
        <topology evidence="1">Multi-pass membrane protein</topology>
    </subcellularLocation>
</comment>
<comment type="tissue specificity">
    <text evidence="3 4">Expressed ubiquitously at low levels, with higher accumulation in developing panicles, shoots and flag leaves.</text>
</comment>
<comment type="developmental stage">
    <text evidence="3">Expressed throughout panicle development. In mature spikelets, present at low levels in anthers and palea/lemma, and barely detectable in the ovaries and lodicules.</text>
</comment>
<comment type="induction">
    <text evidence="4">Induced by cold and abscisic acid (ABA).</text>
</comment>
<comment type="miscellaneous">
    <text evidence="7">Identified as LOC_Os02g40780 in PubMed:17138699.</text>
</comment>
<comment type="similarity">
    <text evidence="6">Belongs to the sterol desaturase family.</text>
</comment>
<gene>
    <name evidence="5" type="primary">GL1-4</name>
    <name evidence="6" type="ordered locus">LOC_Os02g40784</name>
    <name evidence="10" type="ordered locus">Os02g0621300</name>
    <name evidence="8" type="ORF">OJ1234_B11.10</name>
    <name evidence="9" type="ORF">OJ1372_D06.35</name>
    <name evidence="11" type="ORF">OSNPB_020621300</name>
</gene>